<keyword id="KW-0175">Coiled coil</keyword>
<keyword id="KW-1267">Proteomics identification</keyword>
<keyword id="KW-1185">Reference proteome</keyword>
<organism>
    <name type="scientific">Homo sapiens</name>
    <name type="common">Human</name>
    <dbReference type="NCBI Taxonomy" id="9606"/>
    <lineage>
        <taxon>Eukaryota</taxon>
        <taxon>Metazoa</taxon>
        <taxon>Chordata</taxon>
        <taxon>Craniata</taxon>
        <taxon>Vertebrata</taxon>
        <taxon>Euteleostomi</taxon>
        <taxon>Mammalia</taxon>
        <taxon>Eutheria</taxon>
        <taxon>Euarchontoglires</taxon>
        <taxon>Primates</taxon>
        <taxon>Haplorrhini</taxon>
        <taxon>Catarrhini</taxon>
        <taxon>Hominidae</taxon>
        <taxon>Homo</taxon>
    </lineage>
</organism>
<accession>Q8IWA6</accession>
<proteinExistence type="evidence at protein level"/>
<name>CCD60_HUMAN</name>
<comment type="interaction">
    <interactant intactId="EBI-10262147">
        <id>Q8IWA6</id>
    </interactant>
    <interactant intactId="EBI-742948">
        <id>Q5JR59</id>
        <label>MTUS2</label>
    </interactant>
    <organismsDiffer>false</organismsDiffer>
    <experiments>4</experiments>
</comment>
<evidence type="ECO:0000255" key="1"/>
<evidence type="ECO:0000256" key="2">
    <source>
        <dbReference type="SAM" id="MobiDB-lite"/>
    </source>
</evidence>
<evidence type="ECO:0000305" key="3"/>
<gene>
    <name type="primary">CCDC60</name>
</gene>
<reference key="1">
    <citation type="journal article" date="2006" name="Nature">
        <title>The finished DNA sequence of human chromosome 12.</title>
        <authorList>
            <person name="Scherer S.E."/>
            <person name="Muzny D.M."/>
            <person name="Buhay C.J."/>
            <person name="Chen R."/>
            <person name="Cree A."/>
            <person name="Ding Y."/>
            <person name="Dugan-Rocha S."/>
            <person name="Gill R."/>
            <person name="Gunaratne P."/>
            <person name="Harris R.A."/>
            <person name="Hawes A.C."/>
            <person name="Hernandez J."/>
            <person name="Hodgson A.V."/>
            <person name="Hume J."/>
            <person name="Jackson A."/>
            <person name="Khan Z.M."/>
            <person name="Kovar-Smith C."/>
            <person name="Lewis L.R."/>
            <person name="Lozado R.J."/>
            <person name="Metzker M.L."/>
            <person name="Milosavljevic A."/>
            <person name="Miner G.R."/>
            <person name="Montgomery K.T."/>
            <person name="Morgan M.B."/>
            <person name="Nazareth L.V."/>
            <person name="Scott G."/>
            <person name="Sodergren E."/>
            <person name="Song X.-Z."/>
            <person name="Steffen D."/>
            <person name="Lovering R.C."/>
            <person name="Wheeler D.A."/>
            <person name="Worley K.C."/>
            <person name="Yuan Y."/>
            <person name="Zhang Z."/>
            <person name="Adams C.Q."/>
            <person name="Ansari-Lari M.A."/>
            <person name="Ayele M."/>
            <person name="Brown M.J."/>
            <person name="Chen G."/>
            <person name="Chen Z."/>
            <person name="Clerc-Blankenburg K.P."/>
            <person name="Davis C."/>
            <person name="Delgado O."/>
            <person name="Dinh H.H."/>
            <person name="Draper H."/>
            <person name="Gonzalez-Garay M.L."/>
            <person name="Havlak P."/>
            <person name="Jackson L.R."/>
            <person name="Jacob L.S."/>
            <person name="Kelly S.H."/>
            <person name="Li L."/>
            <person name="Li Z."/>
            <person name="Liu J."/>
            <person name="Liu W."/>
            <person name="Lu J."/>
            <person name="Maheshwari M."/>
            <person name="Nguyen B.-V."/>
            <person name="Okwuonu G.O."/>
            <person name="Pasternak S."/>
            <person name="Perez L.M."/>
            <person name="Plopper F.J.H."/>
            <person name="Santibanez J."/>
            <person name="Shen H."/>
            <person name="Tabor P.E."/>
            <person name="Verduzco D."/>
            <person name="Waldron L."/>
            <person name="Wang Q."/>
            <person name="Williams G.A."/>
            <person name="Zhang J."/>
            <person name="Zhou J."/>
            <person name="Allen C.C."/>
            <person name="Amin A.G."/>
            <person name="Anyalebechi V."/>
            <person name="Bailey M."/>
            <person name="Barbaria J.A."/>
            <person name="Bimage K.E."/>
            <person name="Bryant N.P."/>
            <person name="Burch P.E."/>
            <person name="Burkett C.E."/>
            <person name="Burrell K.L."/>
            <person name="Calderon E."/>
            <person name="Cardenas V."/>
            <person name="Carter K."/>
            <person name="Casias K."/>
            <person name="Cavazos I."/>
            <person name="Cavazos S.R."/>
            <person name="Ceasar H."/>
            <person name="Chacko J."/>
            <person name="Chan S.N."/>
            <person name="Chavez D."/>
            <person name="Christopoulos C."/>
            <person name="Chu J."/>
            <person name="Cockrell R."/>
            <person name="Cox C.D."/>
            <person name="Dang M."/>
            <person name="Dathorne S.R."/>
            <person name="David R."/>
            <person name="Davis C.M."/>
            <person name="Davy-Carroll L."/>
            <person name="Deshazo D.R."/>
            <person name="Donlin J.E."/>
            <person name="D'Souza L."/>
            <person name="Eaves K.A."/>
            <person name="Egan A."/>
            <person name="Emery-Cohen A.J."/>
            <person name="Escotto M."/>
            <person name="Flagg N."/>
            <person name="Forbes L.D."/>
            <person name="Gabisi A.M."/>
            <person name="Garza M."/>
            <person name="Hamilton C."/>
            <person name="Henderson N."/>
            <person name="Hernandez O."/>
            <person name="Hines S."/>
            <person name="Hogues M.E."/>
            <person name="Huang M."/>
            <person name="Idlebird D.G."/>
            <person name="Johnson R."/>
            <person name="Jolivet A."/>
            <person name="Jones S."/>
            <person name="Kagan R."/>
            <person name="King L.M."/>
            <person name="Leal B."/>
            <person name="Lebow H."/>
            <person name="Lee S."/>
            <person name="LeVan J.M."/>
            <person name="Lewis L.C."/>
            <person name="London P."/>
            <person name="Lorensuhewa L.M."/>
            <person name="Loulseged H."/>
            <person name="Lovett D.A."/>
            <person name="Lucier A."/>
            <person name="Lucier R.L."/>
            <person name="Ma J."/>
            <person name="Madu R.C."/>
            <person name="Mapua P."/>
            <person name="Martindale A.D."/>
            <person name="Martinez E."/>
            <person name="Massey E."/>
            <person name="Mawhiney S."/>
            <person name="Meador M.G."/>
            <person name="Mendez S."/>
            <person name="Mercado C."/>
            <person name="Mercado I.C."/>
            <person name="Merritt C.E."/>
            <person name="Miner Z.L."/>
            <person name="Minja E."/>
            <person name="Mitchell T."/>
            <person name="Mohabbat F."/>
            <person name="Mohabbat K."/>
            <person name="Montgomery B."/>
            <person name="Moore N."/>
            <person name="Morris S."/>
            <person name="Munidasa M."/>
            <person name="Ngo R.N."/>
            <person name="Nguyen N.B."/>
            <person name="Nickerson E."/>
            <person name="Nwaokelemeh O.O."/>
            <person name="Nwokenkwo S."/>
            <person name="Obregon M."/>
            <person name="Oguh M."/>
            <person name="Oragunye N."/>
            <person name="Oviedo R.J."/>
            <person name="Parish B.J."/>
            <person name="Parker D.N."/>
            <person name="Parrish J."/>
            <person name="Parks K.L."/>
            <person name="Paul H.A."/>
            <person name="Payton B.A."/>
            <person name="Perez A."/>
            <person name="Perrin W."/>
            <person name="Pickens A."/>
            <person name="Primus E.L."/>
            <person name="Pu L.-L."/>
            <person name="Puazo M."/>
            <person name="Quiles M.M."/>
            <person name="Quiroz J.B."/>
            <person name="Rabata D."/>
            <person name="Reeves K."/>
            <person name="Ruiz S.J."/>
            <person name="Shao H."/>
            <person name="Sisson I."/>
            <person name="Sonaike T."/>
            <person name="Sorelle R.P."/>
            <person name="Sutton A.E."/>
            <person name="Svatek A.F."/>
            <person name="Svetz L.A."/>
            <person name="Tamerisa K.S."/>
            <person name="Taylor T.R."/>
            <person name="Teague B."/>
            <person name="Thomas N."/>
            <person name="Thorn R.D."/>
            <person name="Trejos Z.Y."/>
            <person name="Trevino B.K."/>
            <person name="Ukegbu O.N."/>
            <person name="Urban J.B."/>
            <person name="Vasquez L.I."/>
            <person name="Vera V.A."/>
            <person name="Villasana D.M."/>
            <person name="Wang L."/>
            <person name="Ward-Moore S."/>
            <person name="Warren J.T."/>
            <person name="Wei X."/>
            <person name="White F."/>
            <person name="Williamson A.L."/>
            <person name="Wleczyk R."/>
            <person name="Wooden H.S."/>
            <person name="Wooden S.H."/>
            <person name="Yen J."/>
            <person name="Yoon L."/>
            <person name="Yoon V."/>
            <person name="Zorrilla S.E."/>
            <person name="Nelson D."/>
            <person name="Kucherlapati R."/>
            <person name="Weinstock G."/>
            <person name="Gibbs R.A."/>
        </authorList>
    </citation>
    <scope>NUCLEOTIDE SEQUENCE [LARGE SCALE GENOMIC DNA]</scope>
</reference>
<reference key="2">
    <citation type="journal article" date="2004" name="Genome Res.">
        <title>The status, quality, and expansion of the NIH full-length cDNA project: the Mammalian Gene Collection (MGC).</title>
        <authorList>
            <consortium name="The MGC Project Team"/>
        </authorList>
    </citation>
    <scope>NUCLEOTIDE SEQUENCE [LARGE SCALE MRNA]</scope>
    <source>
        <tissue>Brain</tissue>
    </source>
</reference>
<feature type="chain" id="PRO_0000239665" description="Coiled-coil domain-containing protein 60">
    <location>
        <begin position="1"/>
        <end position="550"/>
    </location>
</feature>
<feature type="region of interest" description="Disordered" evidence="2">
    <location>
        <begin position="1"/>
        <end position="21"/>
    </location>
</feature>
<feature type="region of interest" description="Disordered" evidence="2">
    <location>
        <begin position="219"/>
        <end position="293"/>
    </location>
</feature>
<feature type="region of interest" description="Disordered" evidence="2">
    <location>
        <begin position="336"/>
        <end position="367"/>
    </location>
</feature>
<feature type="coiled-coil region" evidence="1">
    <location>
        <begin position="71"/>
        <end position="98"/>
    </location>
</feature>
<feature type="compositionally biased region" description="Low complexity" evidence="2">
    <location>
        <begin position="235"/>
        <end position="256"/>
    </location>
</feature>
<feature type="compositionally biased region" description="Polar residues" evidence="2">
    <location>
        <begin position="336"/>
        <end position="345"/>
    </location>
</feature>
<feature type="sequence variant" id="VAR_033667" description="In dbSNP:rs1064319.">
    <original>I</original>
    <variation>V</variation>
    <location>
        <position position="46"/>
    </location>
</feature>
<feature type="sequence variant" id="VAR_033668" description="In dbSNP:rs2519540.">
    <original>T</original>
    <variation>A</variation>
    <location>
        <position position="115"/>
    </location>
</feature>
<feature type="sequence variant" id="VAR_033669" description="In dbSNP:rs16949292.">
    <original>V</original>
    <variation>I</variation>
    <location>
        <position position="393"/>
    </location>
</feature>
<feature type="sequence conflict" description="In Ref. 2; AAH40553." evidence="3" ref="2">
    <original>K</original>
    <variation>E</variation>
    <location>
        <position position="219"/>
    </location>
</feature>
<dbReference type="EMBL" id="AC002070">
    <property type="status" value="NOT_ANNOTATED_CDS"/>
    <property type="molecule type" value="Genomic_DNA"/>
</dbReference>
<dbReference type="EMBL" id="AC084881">
    <property type="status" value="NOT_ANNOTATED_CDS"/>
    <property type="molecule type" value="Genomic_DNA"/>
</dbReference>
<dbReference type="EMBL" id="BC040553">
    <property type="protein sequence ID" value="AAH40553.1"/>
    <property type="molecule type" value="mRNA"/>
</dbReference>
<dbReference type="CCDS" id="CCDS9190.1"/>
<dbReference type="RefSeq" id="NP_848594.2">
    <property type="nucleotide sequence ID" value="NM_178499.5"/>
</dbReference>
<dbReference type="BioGRID" id="127766">
    <property type="interactions" value="12"/>
</dbReference>
<dbReference type="FunCoup" id="Q8IWA6">
    <property type="interactions" value="15"/>
</dbReference>
<dbReference type="IntAct" id="Q8IWA6">
    <property type="interactions" value="8"/>
</dbReference>
<dbReference type="STRING" id="9606.ENSP00000333374"/>
<dbReference type="GlyGen" id="Q8IWA6">
    <property type="glycosylation" value="3 sites, 1 O-linked glycan (3 sites)"/>
</dbReference>
<dbReference type="iPTMnet" id="Q8IWA6"/>
<dbReference type="PhosphoSitePlus" id="Q8IWA6"/>
<dbReference type="BioMuta" id="CCDC60"/>
<dbReference type="DMDM" id="296434427"/>
<dbReference type="jPOST" id="Q8IWA6"/>
<dbReference type="MassIVE" id="Q8IWA6"/>
<dbReference type="PaxDb" id="9606-ENSP00000333374"/>
<dbReference type="PeptideAtlas" id="Q8IWA6"/>
<dbReference type="ProteomicsDB" id="70832"/>
<dbReference type="Antibodypedia" id="31402">
    <property type="antibodies" value="87 antibodies from 13 providers"/>
</dbReference>
<dbReference type="DNASU" id="160777"/>
<dbReference type="Ensembl" id="ENST00000327554.3">
    <property type="protein sequence ID" value="ENSP00000333374.2"/>
    <property type="gene ID" value="ENSG00000183273.7"/>
</dbReference>
<dbReference type="GeneID" id="160777"/>
<dbReference type="KEGG" id="hsa:160777"/>
<dbReference type="MANE-Select" id="ENST00000327554.3">
    <property type="protein sequence ID" value="ENSP00000333374.2"/>
    <property type="RefSeq nucleotide sequence ID" value="NM_178499.5"/>
    <property type="RefSeq protein sequence ID" value="NP_848594.2"/>
</dbReference>
<dbReference type="UCSC" id="uc001txe.3">
    <property type="organism name" value="human"/>
</dbReference>
<dbReference type="AGR" id="HGNC:28610"/>
<dbReference type="CTD" id="160777"/>
<dbReference type="DisGeNET" id="160777"/>
<dbReference type="GeneCards" id="CCDC60"/>
<dbReference type="HGNC" id="HGNC:28610">
    <property type="gene designation" value="CCDC60"/>
</dbReference>
<dbReference type="HPA" id="ENSG00000183273">
    <property type="expression patterns" value="Tissue enhanced (choroid plexus, fallopian tube, testis)"/>
</dbReference>
<dbReference type="neXtProt" id="NX_Q8IWA6"/>
<dbReference type="OpenTargets" id="ENSG00000183273"/>
<dbReference type="PharmGKB" id="PA143485413"/>
<dbReference type="VEuPathDB" id="HostDB:ENSG00000183273"/>
<dbReference type="eggNOG" id="ENOG502QVFX">
    <property type="taxonomic scope" value="Eukaryota"/>
</dbReference>
<dbReference type="GeneTree" id="ENSGT00390000015428"/>
<dbReference type="HOGENOM" id="CLU_036722_0_0_1"/>
<dbReference type="InParanoid" id="Q8IWA6"/>
<dbReference type="OMA" id="RDIIHCK"/>
<dbReference type="OrthoDB" id="10017343at2759"/>
<dbReference type="PAN-GO" id="Q8IWA6">
    <property type="GO annotations" value="0 GO annotations based on evolutionary models"/>
</dbReference>
<dbReference type="PhylomeDB" id="Q8IWA6"/>
<dbReference type="TreeFam" id="TF336372"/>
<dbReference type="PathwayCommons" id="Q8IWA6"/>
<dbReference type="SignaLink" id="Q8IWA6"/>
<dbReference type="BioGRID-ORCS" id="160777">
    <property type="hits" value="9 hits in 1140 CRISPR screens"/>
</dbReference>
<dbReference type="ChiTaRS" id="CCDC60">
    <property type="organism name" value="human"/>
</dbReference>
<dbReference type="GenomeRNAi" id="160777"/>
<dbReference type="Pharos" id="Q8IWA6">
    <property type="development level" value="Tdark"/>
</dbReference>
<dbReference type="PRO" id="PR:Q8IWA6"/>
<dbReference type="Proteomes" id="UP000005640">
    <property type="component" value="Chromosome 12"/>
</dbReference>
<dbReference type="RNAct" id="Q8IWA6">
    <property type="molecule type" value="protein"/>
</dbReference>
<dbReference type="Bgee" id="ENSG00000183273">
    <property type="expression patterns" value="Expressed in bronchial epithelial cell and 121 other cell types or tissues"/>
</dbReference>
<dbReference type="ExpressionAtlas" id="Q8IWA6">
    <property type="expression patterns" value="baseline and differential"/>
</dbReference>
<dbReference type="InterPro" id="IPR031526">
    <property type="entry name" value="DUF4698"/>
</dbReference>
<dbReference type="PANTHER" id="PTHR34754">
    <property type="entry name" value="COILED-COIL DOMAIN-CONTAINING PROTEIN 60"/>
    <property type="match status" value="1"/>
</dbReference>
<dbReference type="PANTHER" id="PTHR34754:SF1">
    <property type="entry name" value="COILED-COIL DOMAIN-CONTAINING PROTEIN 60"/>
    <property type="match status" value="1"/>
</dbReference>
<dbReference type="Pfam" id="PF15769">
    <property type="entry name" value="DUF4698"/>
    <property type="match status" value="1"/>
</dbReference>
<sequence length="550" mass="63091">MTKVPATKKLQSSPNSGAVRPFYASENLRQVPDKPMKSIKYMDKEIINLKKDLIRSRFLIQSVKIGRGYFAILREETAKKKKQQQLQKLKEEERNKFQPAEKISEIHYGDTLLSTYDDEKLKTLGARVTRRPFTPIHSCIISPSLTEAHVEPLFRQLCALHWLLEALTIDHTHHTMKPVITCWNPKDPGGSKSTIKKINKDKSMGQKWEHFITAPKTKKFKIPTMRVTNRKPSRRGSTLSLSRASGGSSPQSSMISVNPGSDEPPSVNTQVTSSKDIEDNESSSTKPDEEPLYMNLQKLLEMVREDARRTVTIENGMQRKAPSILSVLKQNKSNSAYKEMQTTLKSSERSSSTSAESHIQPVQKKSKNRTNCDINIHYKSGVCNTMRAKFYSVAQEAGFCLQDKMEILMKRQEERGIQKFRAFVLVSNFQKDIAKMRHHISVVKGDAEEIADHWYFDLLSKLPEDLKNFRPAKKILVKLQKFGENLDLRIRPHVLLKVLQDLRIWELCSPDIAVAIEFVREHIIHMPQEDYISWLQSRINIPIGPYSALR</sequence>
<protein>
    <recommendedName>
        <fullName>Coiled-coil domain-containing protein 60</fullName>
    </recommendedName>
</protein>